<reference evidence="4" key="1">
    <citation type="journal article" date="2009" name="BMC Evol. Biol.">
        <title>A proteomic approach for studying insect phylogeny: CAPA peptides of ancient insect taxa (Dictyoptera, Blattoptera) as a test case.</title>
        <authorList>
            <person name="Roth S."/>
            <person name="Fromm B."/>
            <person name="Gaede G."/>
            <person name="Predel R."/>
        </authorList>
    </citation>
    <scope>PROTEIN SEQUENCE</scope>
    <scope>AMIDATION AT THR-11</scope>
    <source>
        <tissue evidence="2">Abdominal perisympathetic organs</tissue>
    </source>
</reference>
<keyword id="KW-0027">Amidation</keyword>
<keyword id="KW-0903">Direct protein sequencing</keyword>
<keyword id="KW-0527">Neuropeptide</keyword>
<keyword id="KW-0964">Secreted</keyword>
<feature type="peptide" id="PRO_0000378755" description="Periviscerokinin-1" evidence="2">
    <location>
        <begin position="1"/>
        <end position="11"/>
    </location>
</feature>
<feature type="modified residue" description="Threonine amide" evidence="2">
    <location>
        <position position="11"/>
    </location>
</feature>
<sequence>GSSGLIPMGRT</sequence>
<protein>
    <recommendedName>
        <fullName evidence="3">Periviscerokinin-1</fullName>
        <shortName evidence="3">PanSp-PVK-1</shortName>
    </recommendedName>
</protein>
<proteinExistence type="evidence at protein level"/>
<comment type="function">
    <text evidence="4">Mediates visceral muscle contractile activity (myotropic activity).</text>
</comment>
<comment type="subcellular location">
    <subcellularLocation>
        <location evidence="4">Secreted</location>
    </subcellularLocation>
</comment>
<comment type="similarity">
    <text evidence="1">Belongs to the periviscerokinin family.</text>
</comment>
<organism>
    <name type="scientific">Panchlora sp. (strain SR-2005)</name>
    <name type="common">Cockroach</name>
    <dbReference type="NCBI Taxonomy" id="348758"/>
    <lineage>
        <taxon>Eukaryota</taxon>
        <taxon>Metazoa</taxon>
        <taxon>Ecdysozoa</taxon>
        <taxon>Arthropoda</taxon>
        <taxon>Hexapoda</taxon>
        <taxon>Insecta</taxon>
        <taxon>Pterygota</taxon>
        <taxon>Neoptera</taxon>
        <taxon>Polyneoptera</taxon>
        <taxon>Dictyoptera</taxon>
        <taxon>Blattodea</taxon>
        <taxon>Blaberoidea</taxon>
        <taxon>Blaberidae</taxon>
        <taxon>Panchlorinae</taxon>
        <taxon>Panchlora</taxon>
    </lineage>
</organism>
<name>PVK1_PANSS</name>
<dbReference type="GO" id="GO:0005576">
    <property type="term" value="C:extracellular region"/>
    <property type="evidence" value="ECO:0007669"/>
    <property type="project" value="UniProtKB-SubCell"/>
</dbReference>
<dbReference type="GO" id="GO:0007218">
    <property type="term" value="P:neuropeptide signaling pathway"/>
    <property type="evidence" value="ECO:0007669"/>
    <property type="project" value="UniProtKB-KW"/>
</dbReference>
<dbReference type="InterPro" id="IPR013231">
    <property type="entry name" value="Periviscerokinin"/>
</dbReference>
<dbReference type="Pfam" id="PF08259">
    <property type="entry name" value="Periviscerokin"/>
    <property type="match status" value="1"/>
</dbReference>
<accession>P85693</accession>
<evidence type="ECO:0000255" key="1"/>
<evidence type="ECO:0000269" key="2">
    <source>
    </source>
</evidence>
<evidence type="ECO:0000303" key="3">
    <source>
    </source>
</evidence>
<evidence type="ECO:0000305" key="4"/>